<dbReference type="EC" id="3.1.1.3" evidence="3"/>
<dbReference type="EMBL" id="AK056648">
    <property type="protein sequence ID" value="BAG51773.1"/>
    <property type="molecule type" value="mRNA"/>
</dbReference>
<dbReference type="EMBL" id="AK127172">
    <property type="protein sequence ID" value="BAC86866.1"/>
    <property type="molecule type" value="mRNA"/>
</dbReference>
<dbReference type="EMBL" id="Z97055">
    <property type="status" value="NOT_ANNOTATED_CDS"/>
    <property type="molecule type" value="Genomic_DNA"/>
</dbReference>
<dbReference type="EMBL" id="CH471138">
    <property type="protein sequence ID" value="EAW73321.1"/>
    <property type="molecule type" value="Genomic_DNA"/>
</dbReference>
<dbReference type="EMBL" id="BC031820">
    <property type="protein sequence ID" value="AAH31820.1"/>
    <property type="molecule type" value="mRNA"/>
</dbReference>
<dbReference type="EMBL" id="BC104839">
    <property type="protein sequence ID" value="AAI04840.1"/>
    <property type="molecule type" value="mRNA"/>
</dbReference>
<dbReference type="EMBL" id="BC104843">
    <property type="protein sequence ID" value="AAI04844.1"/>
    <property type="molecule type" value="mRNA"/>
</dbReference>
<dbReference type="CCDS" id="CCDS14053.1">
    <molecule id="Q7Z6Z6-1"/>
</dbReference>
<dbReference type="CCDS" id="CCDS54537.1">
    <molecule id="Q7Z6Z6-2"/>
</dbReference>
<dbReference type="RefSeq" id="NP_001171146.1">
    <molecule id="Q7Z6Z6-2"/>
    <property type="nucleotide sequence ID" value="NM_001177675.2"/>
</dbReference>
<dbReference type="RefSeq" id="NP_620169.1">
    <molecule id="Q7Z6Z6-1"/>
    <property type="nucleotide sequence ID" value="NM_138814.4"/>
</dbReference>
<dbReference type="BioGRID" id="127291">
    <property type="interactions" value="39"/>
</dbReference>
<dbReference type="FunCoup" id="Q7Z6Z6">
    <property type="interactions" value="12"/>
</dbReference>
<dbReference type="IntAct" id="Q7Z6Z6">
    <property type="interactions" value="25"/>
</dbReference>
<dbReference type="STRING" id="9606.ENSP00000216177"/>
<dbReference type="SwissLipids" id="SLP:000001275"/>
<dbReference type="PhosphoSitePlus" id="Q7Z6Z6"/>
<dbReference type="BioMuta" id="PNPLA5"/>
<dbReference type="DMDM" id="74762442"/>
<dbReference type="MassIVE" id="Q7Z6Z6"/>
<dbReference type="PaxDb" id="9606-ENSP00000216177"/>
<dbReference type="PeptideAtlas" id="Q7Z6Z6"/>
<dbReference type="ProteomicsDB" id="69470">
    <molecule id="Q7Z6Z6-1"/>
</dbReference>
<dbReference type="Antibodypedia" id="27565">
    <property type="antibodies" value="84 antibodies from 16 providers"/>
</dbReference>
<dbReference type="DNASU" id="150379"/>
<dbReference type="Ensembl" id="ENST00000216177.9">
    <molecule id="Q7Z6Z6-1"/>
    <property type="protein sequence ID" value="ENSP00000216177.3"/>
    <property type="gene ID" value="ENSG00000100341.13"/>
</dbReference>
<dbReference type="Ensembl" id="ENST00000381198.7">
    <molecule id="Q7Z6Z6-2"/>
    <property type="protein sequence ID" value="ENSP00000370595.2"/>
    <property type="gene ID" value="ENSG00000100341.13"/>
</dbReference>
<dbReference type="GeneID" id="150379"/>
<dbReference type="KEGG" id="hsa:150379"/>
<dbReference type="MANE-Select" id="ENST00000216177.9">
    <property type="protein sequence ID" value="ENSP00000216177.3"/>
    <property type="RefSeq nucleotide sequence ID" value="NM_138814.4"/>
    <property type="RefSeq protein sequence ID" value="NP_620169.1"/>
</dbReference>
<dbReference type="UCSC" id="uc003beg.4">
    <molecule id="Q7Z6Z6-1"/>
    <property type="organism name" value="human"/>
</dbReference>
<dbReference type="AGR" id="HGNC:24888"/>
<dbReference type="CTD" id="150379"/>
<dbReference type="DisGeNET" id="150379"/>
<dbReference type="GeneCards" id="PNPLA5"/>
<dbReference type="HGNC" id="HGNC:24888">
    <property type="gene designation" value="PNPLA5"/>
</dbReference>
<dbReference type="HPA" id="ENSG00000100341">
    <property type="expression patterns" value="Tissue enhanced (epididymis)"/>
</dbReference>
<dbReference type="MIM" id="611589">
    <property type="type" value="gene"/>
</dbReference>
<dbReference type="neXtProt" id="NX_Q7Z6Z6"/>
<dbReference type="OpenTargets" id="ENSG00000100341"/>
<dbReference type="PharmGKB" id="PA134869344"/>
<dbReference type="VEuPathDB" id="HostDB:ENSG00000100341"/>
<dbReference type="eggNOG" id="KOG3773">
    <property type="taxonomic scope" value="Eukaryota"/>
</dbReference>
<dbReference type="GeneTree" id="ENSGT00940000162116"/>
<dbReference type="HOGENOM" id="CLU_018371_1_0_1"/>
<dbReference type="InParanoid" id="Q7Z6Z6"/>
<dbReference type="OMA" id="SLNWAVP"/>
<dbReference type="OrthoDB" id="197155at2759"/>
<dbReference type="PAN-GO" id="Q7Z6Z6">
    <property type="GO annotations" value="6 GO annotations based on evolutionary models"/>
</dbReference>
<dbReference type="PhylomeDB" id="Q7Z6Z6"/>
<dbReference type="TreeFam" id="TF314272"/>
<dbReference type="PathwayCommons" id="Q7Z6Z6"/>
<dbReference type="Reactome" id="R-HSA-163560">
    <property type="pathway name" value="Triglyceride catabolism"/>
</dbReference>
<dbReference type="SignaLink" id="Q7Z6Z6"/>
<dbReference type="BioGRID-ORCS" id="150379">
    <property type="hits" value="9 hits in 1144 CRISPR screens"/>
</dbReference>
<dbReference type="ChiTaRS" id="PNPLA5">
    <property type="organism name" value="human"/>
</dbReference>
<dbReference type="GenomeRNAi" id="150379"/>
<dbReference type="Pharos" id="Q7Z6Z6">
    <property type="development level" value="Tbio"/>
</dbReference>
<dbReference type="PRO" id="PR:Q7Z6Z6"/>
<dbReference type="Proteomes" id="UP000005640">
    <property type="component" value="Chromosome 22"/>
</dbReference>
<dbReference type="RNAct" id="Q7Z6Z6">
    <property type="molecule type" value="protein"/>
</dbReference>
<dbReference type="Bgee" id="ENSG00000100341">
    <property type="expression patterns" value="Expressed in tibialis anterior and 35 other cell types or tissues"/>
</dbReference>
<dbReference type="ExpressionAtlas" id="Q7Z6Z6">
    <property type="expression patterns" value="baseline and differential"/>
</dbReference>
<dbReference type="GO" id="GO:0005737">
    <property type="term" value="C:cytoplasm"/>
    <property type="evidence" value="ECO:0000318"/>
    <property type="project" value="GO_Central"/>
</dbReference>
<dbReference type="GO" id="GO:0005829">
    <property type="term" value="C:cytosol"/>
    <property type="evidence" value="ECO:0000304"/>
    <property type="project" value="Reactome"/>
</dbReference>
<dbReference type="GO" id="GO:0005811">
    <property type="term" value="C:lipid droplet"/>
    <property type="evidence" value="ECO:0000318"/>
    <property type="project" value="GO_Central"/>
</dbReference>
<dbReference type="GO" id="GO:0016020">
    <property type="term" value="C:membrane"/>
    <property type="evidence" value="ECO:0000318"/>
    <property type="project" value="GO_Central"/>
</dbReference>
<dbReference type="GO" id="GO:0004806">
    <property type="term" value="F:triacylglycerol lipase activity"/>
    <property type="evidence" value="ECO:0000269"/>
    <property type="project" value="Reactome"/>
</dbReference>
<dbReference type="GO" id="GO:0055088">
    <property type="term" value="P:lipid homeostasis"/>
    <property type="evidence" value="ECO:0000318"/>
    <property type="project" value="GO_Central"/>
</dbReference>
<dbReference type="GO" id="GO:0019433">
    <property type="term" value="P:triglyceride catabolic process"/>
    <property type="evidence" value="ECO:0000318"/>
    <property type="project" value="GO_Central"/>
</dbReference>
<dbReference type="CDD" id="cd07223">
    <property type="entry name" value="Pat_PNPLA5-mammals"/>
    <property type="match status" value="1"/>
</dbReference>
<dbReference type="FunFam" id="3.40.1090.10:FF:000027">
    <property type="entry name" value="Patatin like phospholipase domain containing 5"/>
    <property type="match status" value="1"/>
</dbReference>
<dbReference type="FunFam" id="3.40.1090.10:FF:000003">
    <property type="entry name" value="Patatin-like phospholipase domain-containing protein 2"/>
    <property type="match status" value="1"/>
</dbReference>
<dbReference type="Gene3D" id="3.40.1090.10">
    <property type="entry name" value="Cytosolic phospholipase A2 catalytic domain"/>
    <property type="match status" value="2"/>
</dbReference>
<dbReference type="InterPro" id="IPR016035">
    <property type="entry name" value="Acyl_Trfase/lysoPLipase"/>
</dbReference>
<dbReference type="InterPro" id="IPR033562">
    <property type="entry name" value="PLPL"/>
</dbReference>
<dbReference type="InterPro" id="IPR002641">
    <property type="entry name" value="PNPLA_dom"/>
</dbReference>
<dbReference type="PANTHER" id="PTHR12406">
    <property type="entry name" value="CALCIUM-INDEPENDENT PHOSPHOLIPASE A2 IPLA2 -RELATED"/>
    <property type="match status" value="1"/>
</dbReference>
<dbReference type="PANTHER" id="PTHR12406:SF4">
    <property type="entry name" value="PATATIN-LIKE PHOSPHOLIPASE DOMAIN-CONTAINING PROTEIN 5"/>
    <property type="match status" value="1"/>
</dbReference>
<dbReference type="Pfam" id="PF01734">
    <property type="entry name" value="Patatin"/>
    <property type="match status" value="1"/>
</dbReference>
<dbReference type="SUPFAM" id="SSF52151">
    <property type="entry name" value="FabD/lysophospholipase-like"/>
    <property type="match status" value="1"/>
</dbReference>
<dbReference type="PROSITE" id="PS51635">
    <property type="entry name" value="PNPLA"/>
    <property type="match status" value="1"/>
</dbReference>
<name>PLPL5_HUMAN</name>
<sequence>MGFLEEEGRWNLSFSGAGYLGAHHVGATECLRQRAPRLLQGARRIYGSSSGALNAVSIVCGKSVDFCCSHLLGMVGQLERLSLSILHPAYAPIEHVKQQLQDALPPDAHVLASQRLGISLTRWPDGRNFLVTDFATCDELIQALVCTLYFPFYCGLIPPEFRGERYIDGALSNNLPFADCPSTITVSPFHGTVDICPQSTSPNLHELNVFNFSFQISTENFFLGLICLIPPSLEVVADNCRQGYLDALRFLERRGLTKEPVLWTLVSKEPPAPADGNWDAGCDQRWKGGLSLNWKVPHVQVKDVPNFEQLSPELEAALKKACTRDPSRWARFWHSGPGQVLTYLLLPCTLPFEYIYFRSRRLVVWLPDVPADLWWMQGLLRNMALEVFSRTKAQLLGPISPPATRVLETSPLQPQIAPHREELGPTHQA</sequence>
<evidence type="ECO:0000255" key="1">
    <source>
        <dbReference type="PROSITE-ProRule" id="PRU01161"/>
    </source>
</evidence>
<evidence type="ECO:0000269" key="2">
    <source>
    </source>
</evidence>
<evidence type="ECO:0000269" key="3">
    <source>
    </source>
</evidence>
<evidence type="ECO:0000269" key="4">
    <source>
    </source>
</evidence>
<evidence type="ECO:0000303" key="5">
    <source>
    </source>
</evidence>
<evidence type="ECO:0000303" key="6">
    <source>
    </source>
</evidence>
<evidence type="ECO:0000305" key="7"/>
<evidence type="ECO:0000305" key="8">
    <source>
    </source>
</evidence>
<evidence type="ECO:0000312" key="9">
    <source>
        <dbReference type="HGNC" id="HGNC:24888"/>
    </source>
</evidence>
<accession>Q7Z6Z6</accession>
<accession>B1AHL8</accession>
<accession>B3KPR1</accession>
<accession>Q6ZST0</accession>
<proteinExistence type="evidence at protein level"/>
<comment type="function">
    <text evidence="3">Has abundant triacylglycerol lipase activity.</text>
</comment>
<comment type="catalytic activity">
    <reaction evidence="3">
        <text>a triacylglycerol + H2O = a diacylglycerol + a fatty acid + H(+)</text>
        <dbReference type="Rhea" id="RHEA:12044"/>
        <dbReference type="ChEBI" id="CHEBI:15377"/>
        <dbReference type="ChEBI" id="CHEBI:15378"/>
        <dbReference type="ChEBI" id="CHEBI:17855"/>
        <dbReference type="ChEBI" id="CHEBI:18035"/>
        <dbReference type="ChEBI" id="CHEBI:28868"/>
        <dbReference type="EC" id="3.1.1.3"/>
    </reaction>
    <physiologicalReaction direction="left-to-right" evidence="8">
        <dbReference type="Rhea" id="RHEA:12045"/>
    </physiologicalReaction>
</comment>
<comment type="interaction">
    <interactant intactId="EBI-12241582">
        <id>Q7Z6Z6</id>
    </interactant>
    <interactant intactId="EBI-743771">
        <id>Q92624</id>
        <label>APPBP2</label>
    </interactant>
    <organismsDiffer>false</organismsDiffer>
    <experiments>3</experiments>
</comment>
<comment type="alternative products">
    <event type="alternative splicing"/>
    <isoform>
        <id>Q7Z6Z6-1</id>
        <name>1</name>
        <sequence type="displayed"/>
    </isoform>
    <isoform>
        <id>Q7Z6Z6-2</id>
        <name>2</name>
        <sequence type="described" ref="VSP_026373"/>
    </isoform>
</comment>
<comment type="tissue specificity">
    <text evidence="4">Expressed in brain and pituitary gland.</text>
</comment>
<comment type="developmental stage">
    <text evidence="4">No differential expression during adipocyte differentiation.</text>
</comment>
<organism>
    <name type="scientific">Homo sapiens</name>
    <name type="common">Human</name>
    <dbReference type="NCBI Taxonomy" id="9606"/>
    <lineage>
        <taxon>Eukaryota</taxon>
        <taxon>Metazoa</taxon>
        <taxon>Chordata</taxon>
        <taxon>Craniata</taxon>
        <taxon>Vertebrata</taxon>
        <taxon>Euteleostomi</taxon>
        <taxon>Mammalia</taxon>
        <taxon>Eutheria</taxon>
        <taxon>Euarchontoglires</taxon>
        <taxon>Primates</taxon>
        <taxon>Haplorrhini</taxon>
        <taxon>Catarrhini</taxon>
        <taxon>Hominidae</taxon>
        <taxon>Homo</taxon>
    </lineage>
</organism>
<keyword id="KW-0025">Alternative splicing</keyword>
<keyword id="KW-0378">Hydrolase</keyword>
<keyword id="KW-0442">Lipid degradation</keyword>
<keyword id="KW-0443">Lipid metabolism</keyword>
<keyword id="KW-1185">Reference proteome</keyword>
<gene>
    <name evidence="9" type="primary">PNPLA5</name>
    <name evidence="6" type="synonym">GS2L</name>
</gene>
<feature type="chain" id="PRO_0000292021" description="Patatin-like phospholipase domain-containing protein 5">
    <location>
        <begin position="1"/>
        <end position="429"/>
    </location>
</feature>
<feature type="domain" description="PNPLA" evidence="1">
    <location>
        <begin position="12"/>
        <end position="181"/>
    </location>
</feature>
<feature type="short sequence motif" description="GXGXXG" evidence="1">
    <location>
        <begin position="16"/>
        <end position="21"/>
    </location>
</feature>
<feature type="short sequence motif" description="GXSXG" evidence="1">
    <location>
        <begin position="47"/>
        <end position="51"/>
    </location>
</feature>
<feature type="short sequence motif" description="DGA/G" evidence="1">
    <location>
        <begin position="168"/>
        <end position="170"/>
    </location>
</feature>
<feature type="active site" description="Nucleophile" evidence="1">
    <location>
        <position position="49"/>
    </location>
</feature>
<feature type="active site" description="Proton acceptor" evidence="1">
    <location>
        <position position="168"/>
    </location>
</feature>
<feature type="splice variant" id="VSP_026373" description="In isoform 2." evidence="5">
    <location>
        <begin position="66"/>
        <end position="179"/>
    </location>
</feature>
<feature type="sequence variant" id="VAR_032932" description="In dbSNP:rs2071883.">
    <original>L</original>
    <variation>F</variation>
    <location>
        <position position="140"/>
    </location>
</feature>
<feature type="sequence variant" id="VAR_032933" description="In dbSNP:rs10428037.">
    <original>T</original>
    <variation>I</variation>
    <location>
        <position position="200"/>
    </location>
</feature>
<feature type="sequence variant" id="VAR_032934" description="In dbSNP:rs739231." evidence="2">
    <original>W</original>
    <variation>R</variation>
    <location>
        <position position="286"/>
    </location>
</feature>
<feature type="sequence conflict" description="In Ref. 1; BAC86866." evidence="7" ref="1">
    <original>K</original>
    <variation>E</variation>
    <location>
        <position position="319"/>
    </location>
</feature>
<reference key="1">
    <citation type="journal article" date="2004" name="Nat. Genet.">
        <title>Complete sequencing and characterization of 21,243 full-length human cDNAs.</title>
        <authorList>
            <person name="Ota T."/>
            <person name="Suzuki Y."/>
            <person name="Nishikawa T."/>
            <person name="Otsuki T."/>
            <person name="Sugiyama T."/>
            <person name="Irie R."/>
            <person name="Wakamatsu A."/>
            <person name="Hayashi K."/>
            <person name="Sato H."/>
            <person name="Nagai K."/>
            <person name="Kimura K."/>
            <person name="Makita H."/>
            <person name="Sekine M."/>
            <person name="Obayashi M."/>
            <person name="Nishi T."/>
            <person name="Shibahara T."/>
            <person name="Tanaka T."/>
            <person name="Ishii S."/>
            <person name="Yamamoto J."/>
            <person name="Saito K."/>
            <person name="Kawai Y."/>
            <person name="Isono Y."/>
            <person name="Nakamura Y."/>
            <person name="Nagahari K."/>
            <person name="Murakami K."/>
            <person name="Yasuda T."/>
            <person name="Iwayanagi T."/>
            <person name="Wagatsuma M."/>
            <person name="Shiratori A."/>
            <person name="Sudo H."/>
            <person name="Hosoiri T."/>
            <person name="Kaku Y."/>
            <person name="Kodaira H."/>
            <person name="Kondo H."/>
            <person name="Sugawara M."/>
            <person name="Takahashi M."/>
            <person name="Kanda K."/>
            <person name="Yokoi T."/>
            <person name="Furuya T."/>
            <person name="Kikkawa E."/>
            <person name="Omura Y."/>
            <person name="Abe K."/>
            <person name="Kamihara K."/>
            <person name="Katsuta N."/>
            <person name="Sato K."/>
            <person name="Tanikawa M."/>
            <person name="Yamazaki M."/>
            <person name="Ninomiya K."/>
            <person name="Ishibashi T."/>
            <person name="Yamashita H."/>
            <person name="Murakawa K."/>
            <person name="Fujimori K."/>
            <person name="Tanai H."/>
            <person name="Kimata M."/>
            <person name="Watanabe M."/>
            <person name="Hiraoka S."/>
            <person name="Chiba Y."/>
            <person name="Ishida S."/>
            <person name="Ono Y."/>
            <person name="Takiguchi S."/>
            <person name="Watanabe S."/>
            <person name="Yosida M."/>
            <person name="Hotuta T."/>
            <person name="Kusano J."/>
            <person name="Kanehori K."/>
            <person name="Takahashi-Fujii A."/>
            <person name="Hara H."/>
            <person name="Tanase T.-O."/>
            <person name="Nomura Y."/>
            <person name="Togiya S."/>
            <person name="Komai F."/>
            <person name="Hara R."/>
            <person name="Takeuchi K."/>
            <person name="Arita M."/>
            <person name="Imose N."/>
            <person name="Musashino K."/>
            <person name="Yuuki H."/>
            <person name="Oshima A."/>
            <person name="Sasaki N."/>
            <person name="Aotsuka S."/>
            <person name="Yoshikawa Y."/>
            <person name="Matsunawa H."/>
            <person name="Ichihara T."/>
            <person name="Shiohata N."/>
            <person name="Sano S."/>
            <person name="Moriya S."/>
            <person name="Momiyama H."/>
            <person name="Satoh N."/>
            <person name="Takami S."/>
            <person name="Terashima Y."/>
            <person name="Suzuki O."/>
            <person name="Nakagawa S."/>
            <person name="Senoh A."/>
            <person name="Mizoguchi H."/>
            <person name="Goto Y."/>
            <person name="Shimizu F."/>
            <person name="Wakebe H."/>
            <person name="Hishigaki H."/>
            <person name="Watanabe T."/>
            <person name="Sugiyama A."/>
            <person name="Takemoto M."/>
            <person name="Kawakami B."/>
            <person name="Yamazaki M."/>
            <person name="Watanabe K."/>
            <person name="Kumagai A."/>
            <person name="Itakura S."/>
            <person name="Fukuzumi Y."/>
            <person name="Fujimori Y."/>
            <person name="Komiyama M."/>
            <person name="Tashiro H."/>
            <person name="Tanigami A."/>
            <person name="Fujiwara T."/>
            <person name="Ono T."/>
            <person name="Yamada K."/>
            <person name="Fujii Y."/>
            <person name="Ozaki K."/>
            <person name="Hirao M."/>
            <person name="Ohmori Y."/>
            <person name="Kawabata A."/>
            <person name="Hikiji T."/>
            <person name="Kobatake N."/>
            <person name="Inagaki H."/>
            <person name="Ikema Y."/>
            <person name="Okamoto S."/>
            <person name="Okitani R."/>
            <person name="Kawakami T."/>
            <person name="Noguchi S."/>
            <person name="Itoh T."/>
            <person name="Shigeta K."/>
            <person name="Senba T."/>
            <person name="Matsumura K."/>
            <person name="Nakajima Y."/>
            <person name="Mizuno T."/>
            <person name="Morinaga M."/>
            <person name="Sasaki M."/>
            <person name="Togashi T."/>
            <person name="Oyama M."/>
            <person name="Hata H."/>
            <person name="Watanabe M."/>
            <person name="Komatsu T."/>
            <person name="Mizushima-Sugano J."/>
            <person name="Satoh T."/>
            <person name="Shirai Y."/>
            <person name="Takahashi Y."/>
            <person name="Nakagawa K."/>
            <person name="Okumura K."/>
            <person name="Nagase T."/>
            <person name="Nomura N."/>
            <person name="Kikuchi H."/>
            <person name="Masuho Y."/>
            <person name="Yamashita R."/>
            <person name="Nakai K."/>
            <person name="Yada T."/>
            <person name="Nakamura Y."/>
            <person name="Ohara O."/>
            <person name="Isogai T."/>
            <person name="Sugano S."/>
        </authorList>
    </citation>
    <scope>NUCLEOTIDE SEQUENCE [LARGE SCALE MRNA] (ISOFORMS 1 AND 2)</scope>
    <scope>VARIANT ARG-286</scope>
    <source>
        <tissue>Brain</tissue>
        <tissue>Caudate nucleus</tissue>
    </source>
</reference>
<reference key="2">
    <citation type="journal article" date="1999" name="Nature">
        <title>The DNA sequence of human chromosome 22.</title>
        <authorList>
            <person name="Dunham I."/>
            <person name="Hunt A.R."/>
            <person name="Collins J.E."/>
            <person name="Bruskiewich R."/>
            <person name="Beare D.M."/>
            <person name="Clamp M."/>
            <person name="Smink L.J."/>
            <person name="Ainscough R."/>
            <person name="Almeida J.P."/>
            <person name="Babbage A.K."/>
            <person name="Bagguley C."/>
            <person name="Bailey J."/>
            <person name="Barlow K.F."/>
            <person name="Bates K.N."/>
            <person name="Beasley O.P."/>
            <person name="Bird C.P."/>
            <person name="Blakey S.E."/>
            <person name="Bridgeman A.M."/>
            <person name="Buck D."/>
            <person name="Burgess J."/>
            <person name="Burrill W.D."/>
            <person name="Burton J."/>
            <person name="Carder C."/>
            <person name="Carter N.P."/>
            <person name="Chen Y."/>
            <person name="Clark G."/>
            <person name="Clegg S.M."/>
            <person name="Cobley V.E."/>
            <person name="Cole C.G."/>
            <person name="Collier R.E."/>
            <person name="Connor R."/>
            <person name="Conroy D."/>
            <person name="Corby N.R."/>
            <person name="Coville G.J."/>
            <person name="Cox A.V."/>
            <person name="Davis J."/>
            <person name="Dawson E."/>
            <person name="Dhami P.D."/>
            <person name="Dockree C."/>
            <person name="Dodsworth S.J."/>
            <person name="Durbin R.M."/>
            <person name="Ellington A.G."/>
            <person name="Evans K.L."/>
            <person name="Fey J.M."/>
            <person name="Fleming K."/>
            <person name="French L."/>
            <person name="Garner A.A."/>
            <person name="Gilbert J.G.R."/>
            <person name="Goward M.E."/>
            <person name="Grafham D.V."/>
            <person name="Griffiths M.N.D."/>
            <person name="Hall C."/>
            <person name="Hall R.E."/>
            <person name="Hall-Tamlyn G."/>
            <person name="Heathcott R.W."/>
            <person name="Ho S."/>
            <person name="Holmes S."/>
            <person name="Hunt S.E."/>
            <person name="Jones M.C."/>
            <person name="Kershaw J."/>
            <person name="Kimberley A.M."/>
            <person name="King A."/>
            <person name="Laird G.K."/>
            <person name="Langford C.F."/>
            <person name="Leversha M.A."/>
            <person name="Lloyd C."/>
            <person name="Lloyd D.M."/>
            <person name="Martyn I.D."/>
            <person name="Mashreghi-Mohammadi M."/>
            <person name="Matthews L.H."/>
            <person name="Mccann O.T."/>
            <person name="Mcclay J."/>
            <person name="Mclaren S."/>
            <person name="McMurray A.A."/>
            <person name="Milne S.A."/>
            <person name="Mortimore B.J."/>
            <person name="Odell C.N."/>
            <person name="Pavitt R."/>
            <person name="Pearce A.V."/>
            <person name="Pearson D."/>
            <person name="Phillimore B.J.C.T."/>
            <person name="Phillips S.H."/>
            <person name="Plumb R.W."/>
            <person name="Ramsay H."/>
            <person name="Ramsey Y."/>
            <person name="Rogers L."/>
            <person name="Ross M.T."/>
            <person name="Scott C.E."/>
            <person name="Sehra H.K."/>
            <person name="Skuce C.D."/>
            <person name="Smalley S."/>
            <person name="Smith M.L."/>
            <person name="Soderlund C."/>
            <person name="Spragon L."/>
            <person name="Steward C.A."/>
            <person name="Sulston J.E."/>
            <person name="Swann R.M."/>
            <person name="Vaudin M."/>
            <person name="Wall M."/>
            <person name="Wallis J.M."/>
            <person name="Whiteley M.N."/>
            <person name="Willey D.L."/>
            <person name="Williams L."/>
            <person name="Williams S.A."/>
            <person name="Williamson H."/>
            <person name="Wilmer T.E."/>
            <person name="Wilming L."/>
            <person name="Wright C.L."/>
            <person name="Hubbard T."/>
            <person name="Bentley D.R."/>
            <person name="Beck S."/>
            <person name="Rogers J."/>
            <person name="Shimizu N."/>
            <person name="Minoshima S."/>
            <person name="Kawasaki K."/>
            <person name="Sasaki T."/>
            <person name="Asakawa S."/>
            <person name="Kudoh J."/>
            <person name="Shintani A."/>
            <person name="Shibuya K."/>
            <person name="Yoshizaki Y."/>
            <person name="Aoki N."/>
            <person name="Mitsuyama S."/>
            <person name="Roe B.A."/>
            <person name="Chen F."/>
            <person name="Chu L."/>
            <person name="Crabtree J."/>
            <person name="Deschamps S."/>
            <person name="Do A."/>
            <person name="Do T."/>
            <person name="Dorman A."/>
            <person name="Fang F."/>
            <person name="Fu Y."/>
            <person name="Hu P."/>
            <person name="Hua A."/>
            <person name="Kenton S."/>
            <person name="Lai H."/>
            <person name="Lao H.I."/>
            <person name="Lewis J."/>
            <person name="Lewis S."/>
            <person name="Lin S.-P."/>
            <person name="Loh P."/>
            <person name="Malaj E."/>
            <person name="Nguyen T."/>
            <person name="Pan H."/>
            <person name="Phan S."/>
            <person name="Qi S."/>
            <person name="Qian Y."/>
            <person name="Ray L."/>
            <person name="Ren Q."/>
            <person name="Shaull S."/>
            <person name="Sloan D."/>
            <person name="Song L."/>
            <person name="Wang Q."/>
            <person name="Wang Y."/>
            <person name="Wang Z."/>
            <person name="White J."/>
            <person name="Willingham D."/>
            <person name="Wu H."/>
            <person name="Yao Z."/>
            <person name="Zhan M."/>
            <person name="Zhang G."/>
            <person name="Chissoe S."/>
            <person name="Murray J."/>
            <person name="Miller N."/>
            <person name="Minx P."/>
            <person name="Fulton R."/>
            <person name="Johnson D."/>
            <person name="Bemis G."/>
            <person name="Bentley D."/>
            <person name="Bradshaw H."/>
            <person name="Bourne S."/>
            <person name="Cordes M."/>
            <person name="Du Z."/>
            <person name="Fulton L."/>
            <person name="Goela D."/>
            <person name="Graves T."/>
            <person name="Hawkins J."/>
            <person name="Hinds K."/>
            <person name="Kemp K."/>
            <person name="Latreille P."/>
            <person name="Layman D."/>
            <person name="Ozersky P."/>
            <person name="Rohlfing T."/>
            <person name="Scheet P."/>
            <person name="Walker C."/>
            <person name="Wamsley A."/>
            <person name="Wohldmann P."/>
            <person name="Pepin K."/>
            <person name="Nelson J."/>
            <person name="Korf I."/>
            <person name="Bedell J.A."/>
            <person name="Hillier L.W."/>
            <person name="Mardis E."/>
            <person name="Waterston R."/>
            <person name="Wilson R."/>
            <person name="Emanuel B.S."/>
            <person name="Shaikh T."/>
            <person name="Kurahashi H."/>
            <person name="Saitta S."/>
            <person name="Budarf M.L."/>
            <person name="McDermid H.E."/>
            <person name="Johnson A."/>
            <person name="Wong A.C.C."/>
            <person name="Morrow B.E."/>
            <person name="Edelmann L."/>
            <person name="Kim U.J."/>
            <person name="Shizuya H."/>
            <person name="Simon M.I."/>
            <person name="Dumanski J.P."/>
            <person name="Peyrard M."/>
            <person name="Kedra D."/>
            <person name="Seroussi E."/>
            <person name="Fransson I."/>
            <person name="Tapia I."/>
            <person name="Bruder C.E."/>
            <person name="O'Brien K.P."/>
            <person name="Wilkinson P."/>
            <person name="Bodenteich A."/>
            <person name="Hartman K."/>
            <person name="Hu X."/>
            <person name="Khan A.S."/>
            <person name="Lane L."/>
            <person name="Tilahun Y."/>
            <person name="Wright H."/>
        </authorList>
    </citation>
    <scope>NUCLEOTIDE SEQUENCE [LARGE SCALE GENOMIC DNA]</scope>
</reference>
<reference key="3">
    <citation type="submission" date="2005-07" db="EMBL/GenBank/DDBJ databases">
        <authorList>
            <person name="Mural R.J."/>
            <person name="Istrail S."/>
            <person name="Sutton G.G."/>
            <person name="Florea L."/>
            <person name="Halpern A.L."/>
            <person name="Mobarry C.M."/>
            <person name="Lippert R."/>
            <person name="Walenz B."/>
            <person name="Shatkay H."/>
            <person name="Dew I."/>
            <person name="Miller J.R."/>
            <person name="Flanigan M.J."/>
            <person name="Edwards N.J."/>
            <person name="Bolanos R."/>
            <person name="Fasulo D."/>
            <person name="Halldorsson B.V."/>
            <person name="Hannenhalli S."/>
            <person name="Turner R."/>
            <person name="Yooseph S."/>
            <person name="Lu F."/>
            <person name="Nusskern D.R."/>
            <person name="Shue B.C."/>
            <person name="Zheng X.H."/>
            <person name="Zhong F."/>
            <person name="Delcher A.L."/>
            <person name="Huson D.H."/>
            <person name="Kravitz S.A."/>
            <person name="Mouchard L."/>
            <person name="Reinert K."/>
            <person name="Remington K.A."/>
            <person name="Clark A.G."/>
            <person name="Waterman M.S."/>
            <person name="Eichler E.E."/>
            <person name="Adams M.D."/>
            <person name="Hunkapiller M.W."/>
            <person name="Myers E.W."/>
            <person name="Venter J.C."/>
        </authorList>
    </citation>
    <scope>NUCLEOTIDE SEQUENCE [LARGE SCALE GENOMIC DNA]</scope>
</reference>
<reference key="4">
    <citation type="journal article" date="2004" name="Genome Res.">
        <title>The status, quality, and expansion of the NIH full-length cDNA project: the Mammalian Gene Collection (MGC).</title>
        <authorList>
            <consortium name="The MGC Project Team"/>
        </authorList>
    </citation>
    <scope>NUCLEOTIDE SEQUENCE [LARGE SCALE MRNA] (ISOFORM 1)</scope>
    <source>
        <tissue>Brain</tissue>
        <tissue>Skin</tissue>
    </source>
</reference>
<reference key="5">
    <citation type="journal article" date="2005" name="J. Lipid Res.">
        <title>Expression, regulation, and triglyceride hydrolase activity of Adiponutrin family members.</title>
        <authorList>
            <person name="Lake A.C."/>
            <person name="Sun Y."/>
            <person name="Li J.-L."/>
            <person name="Kim J.E."/>
            <person name="Johnson J.W."/>
            <person name="Li D."/>
            <person name="Revett T."/>
            <person name="Shih H.H."/>
            <person name="Liu W."/>
            <person name="Paulsen J.E."/>
            <person name="Gimeno R.E."/>
        </authorList>
    </citation>
    <scope>CATALYTIC ACTIVITY</scope>
    <scope>FUNCTION</scope>
</reference>
<reference key="6">
    <citation type="journal article" date="2006" name="J. Lipid Res.">
        <title>Characterization of the human patatin-like phospholipase family.</title>
        <authorList>
            <person name="Wilson P.A."/>
            <person name="Gardner S.D."/>
            <person name="Lambie N.M."/>
            <person name="Commans S.A."/>
            <person name="Crowther D.J."/>
        </authorList>
    </citation>
    <scope>TISSUE SPECIFICITY</scope>
    <scope>DEVELOPMENTAL STAGE</scope>
</reference>
<protein>
    <recommendedName>
        <fullName evidence="7">Patatin-like phospholipase domain-containing protein 5</fullName>
        <ecNumber evidence="3">3.1.1.3</ecNumber>
    </recommendedName>
    <alternativeName>
        <fullName evidence="6">GS2-like protein</fullName>
    </alternativeName>
</protein>